<accession>Q10VG2</accession>
<protein>
    <recommendedName>
        <fullName evidence="1">NAD(P)H-quinone oxidoreductase subunit H</fullName>
        <ecNumber evidence="1">7.1.1.-</ecNumber>
    </recommendedName>
    <alternativeName>
        <fullName>NAD(P)H dehydrogenase subunit H</fullName>
    </alternativeName>
    <alternativeName>
        <fullName evidence="1">NADH-plastoquinone oxidoreductase subunit H</fullName>
    </alternativeName>
    <alternativeName>
        <fullName evidence="1">NDH-1 subunit H</fullName>
        <shortName evidence="1">NDH-H</shortName>
    </alternativeName>
</protein>
<keyword id="KW-0472">Membrane</keyword>
<keyword id="KW-0520">NAD</keyword>
<keyword id="KW-0521">NADP</keyword>
<keyword id="KW-0618">Plastoquinone</keyword>
<keyword id="KW-0874">Quinone</keyword>
<keyword id="KW-0793">Thylakoid</keyword>
<keyword id="KW-1278">Translocase</keyword>
<keyword id="KW-0813">Transport</keyword>
<name>NDHH_TRIEI</name>
<dbReference type="EC" id="7.1.1.-" evidence="1"/>
<dbReference type="EMBL" id="CP000393">
    <property type="protein sequence ID" value="ABG53762.1"/>
    <property type="molecule type" value="Genomic_DNA"/>
</dbReference>
<dbReference type="RefSeq" id="WP_011614076.1">
    <property type="nucleotide sequence ID" value="NC_008312.1"/>
</dbReference>
<dbReference type="SMR" id="Q10VG2"/>
<dbReference type="STRING" id="203124.Tery_4815"/>
<dbReference type="KEGG" id="ter:Tery_4815"/>
<dbReference type="eggNOG" id="COG0649">
    <property type="taxonomic scope" value="Bacteria"/>
</dbReference>
<dbReference type="HOGENOM" id="CLU_015134_1_2_3"/>
<dbReference type="OrthoDB" id="9801496at2"/>
<dbReference type="GO" id="GO:0031676">
    <property type="term" value="C:plasma membrane-derived thylakoid membrane"/>
    <property type="evidence" value="ECO:0007669"/>
    <property type="project" value="UniProtKB-SubCell"/>
</dbReference>
<dbReference type="GO" id="GO:0051287">
    <property type="term" value="F:NAD binding"/>
    <property type="evidence" value="ECO:0007669"/>
    <property type="project" value="InterPro"/>
</dbReference>
<dbReference type="GO" id="GO:0016655">
    <property type="term" value="F:oxidoreductase activity, acting on NAD(P)H, quinone or similar compound as acceptor"/>
    <property type="evidence" value="ECO:0007669"/>
    <property type="project" value="UniProtKB-UniRule"/>
</dbReference>
<dbReference type="GO" id="GO:0048038">
    <property type="term" value="F:quinone binding"/>
    <property type="evidence" value="ECO:0007669"/>
    <property type="project" value="UniProtKB-KW"/>
</dbReference>
<dbReference type="GO" id="GO:0019684">
    <property type="term" value="P:photosynthesis, light reaction"/>
    <property type="evidence" value="ECO:0007669"/>
    <property type="project" value="UniProtKB-UniRule"/>
</dbReference>
<dbReference type="Gene3D" id="1.10.645.10">
    <property type="entry name" value="Cytochrome-c3 Hydrogenase, chain B"/>
    <property type="match status" value="1"/>
</dbReference>
<dbReference type="HAMAP" id="MF_01358">
    <property type="entry name" value="NDH1_NuoD"/>
    <property type="match status" value="1"/>
</dbReference>
<dbReference type="InterPro" id="IPR001135">
    <property type="entry name" value="NADH_Q_OxRdtase_suD"/>
</dbReference>
<dbReference type="InterPro" id="IPR014029">
    <property type="entry name" value="NADH_UbQ_OxRdtase_49kDa_CS"/>
</dbReference>
<dbReference type="InterPro" id="IPR022885">
    <property type="entry name" value="NDH1_su_D/H"/>
</dbReference>
<dbReference type="InterPro" id="IPR029014">
    <property type="entry name" value="NiFe-Hase_large"/>
</dbReference>
<dbReference type="NCBIfam" id="TIGR01962">
    <property type="entry name" value="NuoD"/>
    <property type="match status" value="1"/>
</dbReference>
<dbReference type="NCBIfam" id="NF004739">
    <property type="entry name" value="PRK06075.1"/>
    <property type="match status" value="1"/>
</dbReference>
<dbReference type="NCBIfam" id="NF005649">
    <property type="entry name" value="PRK07415.1"/>
    <property type="match status" value="1"/>
</dbReference>
<dbReference type="PANTHER" id="PTHR11993:SF10">
    <property type="entry name" value="NADH DEHYDROGENASE [UBIQUINONE] IRON-SULFUR PROTEIN 2, MITOCHONDRIAL"/>
    <property type="match status" value="1"/>
</dbReference>
<dbReference type="PANTHER" id="PTHR11993">
    <property type="entry name" value="NADH-UBIQUINONE OXIDOREDUCTASE 49 KDA SUBUNIT"/>
    <property type="match status" value="1"/>
</dbReference>
<dbReference type="Pfam" id="PF00346">
    <property type="entry name" value="Complex1_49kDa"/>
    <property type="match status" value="1"/>
</dbReference>
<dbReference type="SUPFAM" id="SSF56762">
    <property type="entry name" value="HydB/Nqo4-like"/>
    <property type="match status" value="1"/>
</dbReference>
<dbReference type="PROSITE" id="PS00535">
    <property type="entry name" value="COMPLEX1_49K"/>
    <property type="match status" value="1"/>
</dbReference>
<comment type="function">
    <text evidence="1">NDH-1 shuttles electrons from an unknown electron donor, via FMN and iron-sulfur (Fe-S) centers, to quinones in the respiratory and/or the photosynthetic chain. The immediate electron acceptor for the enzyme in this species is believed to be plastoquinone. Couples the redox reaction to proton translocation, and thus conserves the redox energy in a proton gradient. Cyanobacterial NDH-1 also plays a role in inorganic carbon-concentration.</text>
</comment>
<comment type="catalytic activity">
    <reaction evidence="1">
        <text>a plastoquinone + NADH + (n+1) H(+)(in) = a plastoquinol + NAD(+) + n H(+)(out)</text>
        <dbReference type="Rhea" id="RHEA:42608"/>
        <dbReference type="Rhea" id="RHEA-COMP:9561"/>
        <dbReference type="Rhea" id="RHEA-COMP:9562"/>
        <dbReference type="ChEBI" id="CHEBI:15378"/>
        <dbReference type="ChEBI" id="CHEBI:17757"/>
        <dbReference type="ChEBI" id="CHEBI:57540"/>
        <dbReference type="ChEBI" id="CHEBI:57945"/>
        <dbReference type="ChEBI" id="CHEBI:62192"/>
    </reaction>
</comment>
<comment type="catalytic activity">
    <reaction evidence="1">
        <text>a plastoquinone + NADPH + (n+1) H(+)(in) = a plastoquinol + NADP(+) + n H(+)(out)</text>
        <dbReference type="Rhea" id="RHEA:42612"/>
        <dbReference type="Rhea" id="RHEA-COMP:9561"/>
        <dbReference type="Rhea" id="RHEA-COMP:9562"/>
        <dbReference type="ChEBI" id="CHEBI:15378"/>
        <dbReference type="ChEBI" id="CHEBI:17757"/>
        <dbReference type="ChEBI" id="CHEBI:57783"/>
        <dbReference type="ChEBI" id="CHEBI:58349"/>
        <dbReference type="ChEBI" id="CHEBI:62192"/>
    </reaction>
</comment>
<comment type="subunit">
    <text evidence="1">NDH-1 can be composed of about 15 different subunits; different subcomplexes with different compositions have been identified which probably have different functions.</text>
</comment>
<comment type="subcellular location">
    <subcellularLocation>
        <location evidence="1">Cellular thylakoid membrane</location>
        <topology evidence="1">Peripheral membrane protein</topology>
        <orientation evidence="1">Cytoplasmic side</orientation>
    </subcellularLocation>
</comment>
<comment type="similarity">
    <text evidence="1">Belongs to the complex I 49 kDa subunit family.</text>
</comment>
<reference key="1">
    <citation type="journal article" date="2015" name="Proc. Natl. Acad. Sci. U.S.A.">
        <title>Trichodesmium genome maintains abundant, widespread noncoding DNA in situ, despite oligotrophic lifestyle.</title>
        <authorList>
            <person name="Walworth N."/>
            <person name="Pfreundt U."/>
            <person name="Nelson W.C."/>
            <person name="Mincer T."/>
            <person name="Heidelberg J.F."/>
            <person name="Fu F."/>
            <person name="Waterbury J.B."/>
            <person name="Glavina del Rio T."/>
            <person name="Goodwin L."/>
            <person name="Kyrpides N.C."/>
            <person name="Land M.L."/>
            <person name="Woyke T."/>
            <person name="Hutchins D.A."/>
            <person name="Hess W.R."/>
            <person name="Webb E.A."/>
        </authorList>
    </citation>
    <scope>NUCLEOTIDE SEQUENCE [LARGE SCALE GENOMIC DNA]</scope>
    <source>
        <strain>IMS101</strain>
    </source>
</reference>
<sequence length="394" mass="45437">MSQIQTRTEPMVINMGPHHPSMHGVLRLIVTLDGEDVIDCEPVIGYLHRGMEKIAENRTNTMFVPYVSRWDYAAGMFNEAVTVNAPEQLADIAVPKRASYIRVIMLELNRIANHLLWLGPFLADVGAQTPFFYIFREREMIYDLWEAATGYRMVNNNYFRIGGVAADLPYGWVDKCEDFCDYFLPKVDEYERLITNNPIFRRRIMGLGVISREEAINWGLSGPMLRASGVKWDLRKVDHYECYDDFDWEVHWEKDGDCLARYLVRIREMRESVNIIRQAIKGLPGGPYENLEAKRMAEGPKSEWNDFDYQFLGKKIPPTFKIPKGEHYVRIESGKGEIGIYIIGDNNIFPWRFKIRAADFVNLQIFPHILQGAKVADLVAILGSIDIIMGSVDR</sequence>
<feature type="chain" id="PRO_0000371944" description="NAD(P)H-quinone oxidoreductase subunit H">
    <location>
        <begin position="1"/>
        <end position="394"/>
    </location>
</feature>
<gene>
    <name evidence="1" type="primary">ndhH</name>
    <name type="ordered locus">Tery_4815</name>
</gene>
<proteinExistence type="inferred from homology"/>
<evidence type="ECO:0000255" key="1">
    <source>
        <dbReference type="HAMAP-Rule" id="MF_01358"/>
    </source>
</evidence>
<organism>
    <name type="scientific">Trichodesmium erythraeum (strain IMS101)</name>
    <dbReference type="NCBI Taxonomy" id="203124"/>
    <lineage>
        <taxon>Bacteria</taxon>
        <taxon>Bacillati</taxon>
        <taxon>Cyanobacteriota</taxon>
        <taxon>Cyanophyceae</taxon>
        <taxon>Oscillatoriophycideae</taxon>
        <taxon>Oscillatoriales</taxon>
        <taxon>Microcoleaceae</taxon>
        <taxon>Trichodesmium</taxon>
    </lineage>
</organism>